<feature type="chain" id="PRO_0000251318" description="Large ribosomal subunit protein uL18">
    <location>
        <begin position="1"/>
        <end position="116"/>
    </location>
</feature>
<keyword id="KW-1185">Reference proteome</keyword>
<keyword id="KW-0687">Ribonucleoprotein</keyword>
<keyword id="KW-0689">Ribosomal protein</keyword>
<keyword id="KW-0694">RNA-binding</keyword>
<keyword id="KW-0699">rRNA-binding</keyword>
<dbReference type="EMBL" id="CP000155">
    <property type="protein sequence ID" value="ABC32846.1"/>
    <property type="molecule type" value="Genomic_DNA"/>
</dbReference>
<dbReference type="RefSeq" id="WP_011399904.1">
    <property type="nucleotide sequence ID" value="NC_007645.1"/>
</dbReference>
<dbReference type="SMR" id="Q2S928"/>
<dbReference type="STRING" id="349521.HCH_06200"/>
<dbReference type="KEGG" id="hch:HCH_06200"/>
<dbReference type="eggNOG" id="COG0256">
    <property type="taxonomic scope" value="Bacteria"/>
</dbReference>
<dbReference type="HOGENOM" id="CLU_098841_0_1_6"/>
<dbReference type="OrthoDB" id="9810939at2"/>
<dbReference type="Proteomes" id="UP000000238">
    <property type="component" value="Chromosome"/>
</dbReference>
<dbReference type="GO" id="GO:0022625">
    <property type="term" value="C:cytosolic large ribosomal subunit"/>
    <property type="evidence" value="ECO:0007669"/>
    <property type="project" value="TreeGrafter"/>
</dbReference>
<dbReference type="GO" id="GO:0008097">
    <property type="term" value="F:5S rRNA binding"/>
    <property type="evidence" value="ECO:0007669"/>
    <property type="project" value="TreeGrafter"/>
</dbReference>
<dbReference type="GO" id="GO:0003735">
    <property type="term" value="F:structural constituent of ribosome"/>
    <property type="evidence" value="ECO:0007669"/>
    <property type="project" value="InterPro"/>
</dbReference>
<dbReference type="GO" id="GO:0006412">
    <property type="term" value="P:translation"/>
    <property type="evidence" value="ECO:0007669"/>
    <property type="project" value="UniProtKB-UniRule"/>
</dbReference>
<dbReference type="CDD" id="cd00432">
    <property type="entry name" value="Ribosomal_L18_L5e"/>
    <property type="match status" value="1"/>
</dbReference>
<dbReference type="FunFam" id="3.30.420.100:FF:000001">
    <property type="entry name" value="50S ribosomal protein L18"/>
    <property type="match status" value="1"/>
</dbReference>
<dbReference type="Gene3D" id="3.30.420.100">
    <property type="match status" value="1"/>
</dbReference>
<dbReference type="HAMAP" id="MF_01337_B">
    <property type="entry name" value="Ribosomal_uL18_B"/>
    <property type="match status" value="1"/>
</dbReference>
<dbReference type="InterPro" id="IPR004389">
    <property type="entry name" value="Ribosomal_uL18_bac-type"/>
</dbReference>
<dbReference type="InterPro" id="IPR005484">
    <property type="entry name" value="Ribosomal_uL18_bac/euk"/>
</dbReference>
<dbReference type="NCBIfam" id="TIGR00060">
    <property type="entry name" value="L18_bact"/>
    <property type="match status" value="1"/>
</dbReference>
<dbReference type="PANTHER" id="PTHR12899">
    <property type="entry name" value="39S RIBOSOMAL PROTEIN L18, MITOCHONDRIAL"/>
    <property type="match status" value="1"/>
</dbReference>
<dbReference type="PANTHER" id="PTHR12899:SF3">
    <property type="entry name" value="LARGE RIBOSOMAL SUBUNIT PROTEIN UL18M"/>
    <property type="match status" value="1"/>
</dbReference>
<dbReference type="Pfam" id="PF00861">
    <property type="entry name" value="Ribosomal_L18p"/>
    <property type="match status" value="1"/>
</dbReference>
<dbReference type="SUPFAM" id="SSF53137">
    <property type="entry name" value="Translational machinery components"/>
    <property type="match status" value="1"/>
</dbReference>
<name>RL18_HAHCH</name>
<accession>Q2S928</accession>
<comment type="function">
    <text evidence="1">This is one of the proteins that bind and probably mediate the attachment of the 5S RNA into the large ribosomal subunit, where it forms part of the central protuberance.</text>
</comment>
<comment type="subunit">
    <text evidence="1">Part of the 50S ribosomal subunit; part of the 5S rRNA/L5/L18/L25 subcomplex. Contacts the 5S and 23S rRNAs.</text>
</comment>
<comment type="similarity">
    <text evidence="1">Belongs to the universal ribosomal protein uL18 family.</text>
</comment>
<reference key="1">
    <citation type="journal article" date="2005" name="Nucleic Acids Res.">
        <title>Genomic blueprint of Hahella chejuensis, a marine microbe producing an algicidal agent.</title>
        <authorList>
            <person name="Jeong H."/>
            <person name="Yim J.H."/>
            <person name="Lee C."/>
            <person name="Choi S.-H."/>
            <person name="Park Y.K."/>
            <person name="Yoon S.H."/>
            <person name="Hur C.-G."/>
            <person name="Kang H.-Y."/>
            <person name="Kim D."/>
            <person name="Lee H.H."/>
            <person name="Park K.H."/>
            <person name="Park S.-H."/>
            <person name="Park H.-S."/>
            <person name="Lee H.K."/>
            <person name="Oh T.K."/>
            <person name="Kim J.F."/>
        </authorList>
    </citation>
    <scope>NUCLEOTIDE SEQUENCE [LARGE SCALE GENOMIC DNA]</scope>
    <source>
        <strain>KCTC 2396</strain>
    </source>
</reference>
<protein>
    <recommendedName>
        <fullName evidence="1">Large ribosomal subunit protein uL18</fullName>
    </recommendedName>
    <alternativeName>
        <fullName evidence="2">50S ribosomal protein L18</fullName>
    </alternativeName>
</protein>
<gene>
    <name evidence="1" type="primary">rplR</name>
    <name type="ordered locus">HCH_06200</name>
</gene>
<organism>
    <name type="scientific">Hahella chejuensis (strain KCTC 2396)</name>
    <dbReference type="NCBI Taxonomy" id="349521"/>
    <lineage>
        <taxon>Bacteria</taxon>
        <taxon>Pseudomonadati</taxon>
        <taxon>Pseudomonadota</taxon>
        <taxon>Gammaproteobacteria</taxon>
        <taxon>Oceanospirillales</taxon>
        <taxon>Hahellaceae</taxon>
        <taxon>Hahella</taxon>
    </lineage>
</organism>
<evidence type="ECO:0000255" key="1">
    <source>
        <dbReference type="HAMAP-Rule" id="MF_01337"/>
    </source>
</evidence>
<evidence type="ECO:0000305" key="2"/>
<proteinExistence type="inferred from homology"/>
<sequence length="116" mass="12616">MSDKKISRLRRAKKTRYKIRELGVDRLSINRTPRHIYAQIISADGSKVLATASTLDKDLRAGATGNVEAAGKVGAMIAERAKAAGITKVAFDRSGFKYHGRVKALADAARENGLEF</sequence>